<proteinExistence type="inferred from homology"/>
<protein>
    <recommendedName>
        <fullName evidence="1 2">Succinate--CoA ligase [GDP-forming] subunit beta, mitochondrial</fullName>
        <ecNumber evidence="2">6.2.1.4</ecNumber>
    </recommendedName>
    <alternativeName>
        <fullName evidence="2">GTP-specific succinyl-CoA synthetase subunit beta</fullName>
        <shortName evidence="2">G-SCS</shortName>
        <shortName evidence="2">GTPSCS</shortName>
    </alternativeName>
    <alternativeName>
        <fullName evidence="2">Succinyl-CoA synthetase beta-G chain</fullName>
        <shortName evidence="2">SCS-betaG</shortName>
    </alternativeName>
</protein>
<dbReference type="EC" id="6.2.1.4" evidence="2"/>
<dbReference type="EMBL" id="FO080878">
    <property type="protein sequence ID" value="CCD67452.1"/>
    <property type="molecule type" value="Genomic_DNA"/>
</dbReference>
<dbReference type="PIR" id="T29296">
    <property type="entry name" value="T29296"/>
</dbReference>
<dbReference type="RefSeq" id="NP_501266.1">
    <property type="nucleotide sequence ID" value="NM_068865.6"/>
</dbReference>
<dbReference type="SMR" id="P53589"/>
<dbReference type="BioGRID" id="42673">
    <property type="interactions" value="5"/>
</dbReference>
<dbReference type="FunCoup" id="P53589">
    <property type="interactions" value="1149"/>
</dbReference>
<dbReference type="STRING" id="6239.C50F7.4.1"/>
<dbReference type="PaxDb" id="6239-C50F7.4"/>
<dbReference type="PeptideAtlas" id="P53589"/>
<dbReference type="EnsemblMetazoa" id="C50F7.4.1">
    <property type="protein sequence ID" value="C50F7.4.1"/>
    <property type="gene ID" value="WBGene00016844"/>
</dbReference>
<dbReference type="GeneID" id="177555"/>
<dbReference type="KEGG" id="cel:CELE_C50F7.4"/>
<dbReference type="UCSC" id="C50F7.4">
    <property type="organism name" value="c. elegans"/>
</dbReference>
<dbReference type="AGR" id="WB:WBGene00016844"/>
<dbReference type="CTD" id="177555"/>
<dbReference type="WormBase" id="C50F7.4">
    <property type="protein sequence ID" value="CE04242"/>
    <property type="gene ID" value="WBGene00016844"/>
    <property type="gene designation" value="sucg-1"/>
</dbReference>
<dbReference type="eggNOG" id="KOG1447">
    <property type="taxonomic scope" value="Eukaryota"/>
</dbReference>
<dbReference type="GeneTree" id="ENSGT00390000010170"/>
<dbReference type="HOGENOM" id="CLU_037430_0_0_1"/>
<dbReference type="InParanoid" id="P53589"/>
<dbReference type="OMA" id="KQMIGNR"/>
<dbReference type="OrthoDB" id="1552at2759"/>
<dbReference type="PhylomeDB" id="P53589"/>
<dbReference type="Reactome" id="R-CEL-71403">
    <property type="pathway name" value="Citric acid cycle (TCA cycle)"/>
</dbReference>
<dbReference type="Reactome" id="R-CEL-9837999">
    <property type="pathway name" value="Mitochondrial protein degradation"/>
</dbReference>
<dbReference type="UniPathway" id="UPA00223">
    <property type="reaction ID" value="UER00999"/>
</dbReference>
<dbReference type="PRO" id="PR:P53589"/>
<dbReference type="Proteomes" id="UP000001940">
    <property type="component" value="Chromosome IV"/>
</dbReference>
<dbReference type="Bgee" id="WBGene00016844">
    <property type="expression patterns" value="Expressed in germ line (C elegans) and 4 other cell types or tissues"/>
</dbReference>
<dbReference type="GO" id="GO:0005739">
    <property type="term" value="C:mitochondrion"/>
    <property type="evidence" value="ECO:0000318"/>
    <property type="project" value="GO_Central"/>
</dbReference>
<dbReference type="GO" id="GO:0042709">
    <property type="term" value="C:succinate-CoA ligase complex"/>
    <property type="evidence" value="ECO:0000318"/>
    <property type="project" value="GO_Central"/>
</dbReference>
<dbReference type="GO" id="GO:0005524">
    <property type="term" value="F:ATP binding"/>
    <property type="evidence" value="ECO:0007669"/>
    <property type="project" value="InterPro"/>
</dbReference>
<dbReference type="GO" id="GO:0005525">
    <property type="term" value="F:GTP binding"/>
    <property type="evidence" value="ECO:0007669"/>
    <property type="project" value="UniProtKB-UniRule"/>
</dbReference>
<dbReference type="GO" id="GO:0000287">
    <property type="term" value="F:magnesium ion binding"/>
    <property type="evidence" value="ECO:0007669"/>
    <property type="project" value="UniProtKB-UniRule"/>
</dbReference>
<dbReference type="GO" id="GO:0004776">
    <property type="term" value="F:succinate-CoA ligase (GDP-forming) activity"/>
    <property type="evidence" value="ECO:0000318"/>
    <property type="project" value="GO_Central"/>
</dbReference>
<dbReference type="GO" id="GO:0006104">
    <property type="term" value="P:succinyl-CoA metabolic process"/>
    <property type="evidence" value="ECO:0000318"/>
    <property type="project" value="GO_Central"/>
</dbReference>
<dbReference type="GO" id="GO:0006099">
    <property type="term" value="P:tricarboxylic acid cycle"/>
    <property type="evidence" value="ECO:0000318"/>
    <property type="project" value="GO_Central"/>
</dbReference>
<dbReference type="FunFam" id="3.30.470.20:FF:000002">
    <property type="entry name" value="Succinate--CoA ligase [ADP-forming] subunit beta"/>
    <property type="match status" value="1"/>
</dbReference>
<dbReference type="FunFam" id="3.40.50.261:FF:000001">
    <property type="entry name" value="Succinate--CoA ligase [ADP-forming] subunit beta"/>
    <property type="match status" value="1"/>
</dbReference>
<dbReference type="FunFam" id="3.30.1490.20:FF:000004">
    <property type="entry name" value="Succinate--CoA ligase [ADP-forming] subunit beta, mitochondrial"/>
    <property type="match status" value="1"/>
</dbReference>
<dbReference type="Gene3D" id="3.30.1490.20">
    <property type="entry name" value="ATP-grasp fold, A domain"/>
    <property type="match status" value="1"/>
</dbReference>
<dbReference type="Gene3D" id="3.30.470.20">
    <property type="entry name" value="ATP-grasp fold, B domain"/>
    <property type="match status" value="1"/>
</dbReference>
<dbReference type="Gene3D" id="3.40.50.261">
    <property type="entry name" value="Succinyl-CoA synthetase domains"/>
    <property type="match status" value="1"/>
</dbReference>
<dbReference type="HAMAP" id="MF_00558">
    <property type="entry name" value="Succ_CoA_beta"/>
    <property type="match status" value="1"/>
</dbReference>
<dbReference type="HAMAP" id="MF_03221">
    <property type="entry name" value="Succ_CoA_betaG_euk"/>
    <property type="match status" value="1"/>
</dbReference>
<dbReference type="InterPro" id="IPR013650">
    <property type="entry name" value="ATP-grasp_succ-CoA_synth-type"/>
</dbReference>
<dbReference type="InterPro" id="IPR013815">
    <property type="entry name" value="ATP_grasp_subdomain_1"/>
</dbReference>
<dbReference type="InterPro" id="IPR017866">
    <property type="entry name" value="Succ-CoA_synthase_bsu_CS"/>
</dbReference>
<dbReference type="InterPro" id="IPR005811">
    <property type="entry name" value="SUCC_ACL_C"/>
</dbReference>
<dbReference type="InterPro" id="IPR034722">
    <property type="entry name" value="Succ_CoA_betaG_euk"/>
</dbReference>
<dbReference type="InterPro" id="IPR005809">
    <property type="entry name" value="Succ_CoA_ligase-like_bsu"/>
</dbReference>
<dbReference type="InterPro" id="IPR016102">
    <property type="entry name" value="Succinyl-CoA_synth-like"/>
</dbReference>
<dbReference type="NCBIfam" id="NF001913">
    <property type="entry name" value="PRK00696.1"/>
    <property type="match status" value="1"/>
</dbReference>
<dbReference type="NCBIfam" id="TIGR01016">
    <property type="entry name" value="sucCoAbeta"/>
    <property type="match status" value="1"/>
</dbReference>
<dbReference type="PANTHER" id="PTHR11815:SF10">
    <property type="entry name" value="SUCCINATE--COA LIGASE [GDP-FORMING] SUBUNIT BETA, MITOCHONDRIAL"/>
    <property type="match status" value="1"/>
</dbReference>
<dbReference type="PANTHER" id="PTHR11815">
    <property type="entry name" value="SUCCINYL-COA SYNTHETASE BETA CHAIN"/>
    <property type="match status" value="1"/>
</dbReference>
<dbReference type="Pfam" id="PF08442">
    <property type="entry name" value="ATP-grasp_2"/>
    <property type="match status" value="1"/>
</dbReference>
<dbReference type="Pfam" id="PF00549">
    <property type="entry name" value="Ligase_CoA"/>
    <property type="match status" value="1"/>
</dbReference>
<dbReference type="PIRSF" id="PIRSF001554">
    <property type="entry name" value="SucCS_beta"/>
    <property type="match status" value="1"/>
</dbReference>
<dbReference type="SUPFAM" id="SSF56059">
    <property type="entry name" value="Glutathione synthetase ATP-binding domain-like"/>
    <property type="match status" value="1"/>
</dbReference>
<dbReference type="SUPFAM" id="SSF52210">
    <property type="entry name" value="Succinyl-CoA synthetase domains"/>
    <property type="match status" value="1"/>
</dbReference>
<dbReference type="PROSITE" id="PS01217">
    <property type="entry name" value="SUCCINYL_COA_LIG_3"/>
    <property type="match status" value="1"/>
</dbReference>
<feature type="transit peptide" description="Mitochondrion" evidence="2">
    <location>
        <begin position="1"/>
        <end position="19"/>
    </location>
</feature>
<feature type="chain" id="PRO_0000033359" description="Succinate--CoA ligase [GDP-forming] subunit beta, mitochondrial" evidence="2">
    <location>
        <begin position="20"/>
        <end position="415"/>
    </location>
</feature>
<feature type="domain" description="ATP-grasp" evidence="2">
    <location>
        <begin position="28"/>
        <end position="258"/>
    </location>
</feature>
<feature type="binding site" evidence="2">
    <location>
        <position position="39"/>
    </location>
    <ligand>
        <name>GTP</name>
        <dbReference type="ChEBI" id="CHEBI:37565"/>
    </ligand>
</feature>
<feature type="binding site" evidence="2">
    <location>
        <begin position="72"/>
        <end position="74"/>
    </location>
    <ligand>
        <name>GTP</name>
        <dbReference type="ChEBI" id="CHEBI:37565"/>
    </ligand>
</feature>
<feature type="binding site" evidence="2">
    <location>
        <position position="130"/>
    </location>
    <ligand>
        <name>GTP</name>
        <dbReference type="ChEBI" id="CHEBI:37565"/>
    </ligand>
</feature>
<feature type="binding site" evidence="2">
    <location>
        <position position="227"/>
    </location>
    <ligand>
        <name>Mg(2+)</name>
        <dbReference type="ChEBI" id="CHEBI:18420"/>
    </ligand>
</feature>
<feature type="binding site" evidence="2">
    <location>
        <position position="241"/>
    </location>
    <ligand>
        <name>Mg(2+)</name>
        <dbReference type="ChEBI" id="CHEBI:18420"/>
    </ligand>
</feature>
<feature type="binding site" evidence="2">
    <location>
        <position position="292"/>
    </location>
    <ligand>
        <name>substrate</name>
        <note>ligand shared with subunit alpha</note>
    </ligand>
</feature>
<feature type="binding site" evidence="2">
    <location>
        <begin position="349"/>
        <end position="351"/>
    </location>
    <ligand>
        <name>substrate</name>
        <note>ligand shared with subunit alpha</note>
    </ligand>
</feature>
<feature type="site" description="Important for substrate specificity" evidence="2">
    <location>
        <position position="61"/>
    </location>
</feature>
<feature type="site" description="Important for substrate specificity" evidence="2">
    <location>
        <position position="131"/>
    </location>
</feature>
<accession>P53589</accession>
<name>SUCB2_CAEEL</name>
<gene>
    <name evidence="3" type="primary">sucg-1</name>
    <name evidence="3" type="ORF">C50F7.4</name>
</gene>
<evidence type="ECO:0000250" key="1">
    <source>
        <dbReference type="UniProtKB" id="Q96I99"/>
    </source>
</evidence>
<evidence type="ECO:0000255" key="2">
    <source>
        <dbReference type="HAMAP-Rule" id="MF_03221"/>
    </source>
</evidence>
<evidence type="ECO:0000312" key="3">
    <source>
        <dbReference type="WormBase" id="C50F7.4"/>
    </source>
</evidence>
<organism>
    <name type="scientific">Caenorhabditis elegans</name>
    <dbReference type="NCBI Taxonomy" id="6239"/>
    <lineage>
        <taxon>Eukaryota</taxon>
        <taxon>Metazoa</taxon>
        <taxon>Ecdysozoa</taxon>
        <taxon>Nematoda</taxon>
        <taxon>Chromadorea</taxon>
        <taxon>Rhabditida</taxon>
        <taxon>Rhabditina</taxon>
        <taxon>Rhabditomorpha</taxon>
        <taxon>Rhabditoidea</taxon>
        <taxon>Rhabditidae</taxon>
        <taxon>Peloderinae</taxon>
        <taxon>Caenorhabditis</taxon>
    </lineage>
</organism>
<comment type="function">
    <text evidence="2">GTP-specific succinyl-CoA synthetase functions in the citric acid cycle (TCA), coupling the hydrolysis of succinyl-CoA to the synthesis of GTP and thus represents the only step of substrate-level phosphorylation in the TCA. The beta subunit provides nucleotide specificity of the enzyme and binds the substrate succinate, while the binding sites for coenzyme A and phosphate are found in the alpha subunit.</text>
</comment>
<comment type="catalytic activity">
    <reaction evidence="2">
        <text>GTP + succinate + CoA = succinyl-CoA + GDP + phosphate</text>
        <dbReference type="Rhea" id="RHEA:22120"/>
        <dbReference type="ChEBI" id="CHEBI:30031"/>
        <dbReference type="ChEBI" id="CHEBI:37565"/>
        <dbReference type="ChEBI" id="CHEBI:43474"/>
        <dbReference type="ChEBI" id="CHEBI:57287"/>
        <dbReference type="ChEBI" id="CHEBI:57292"/>
        <dbReference type="ChEBI" id="CHEBI:58189"/>
        <dbReference type="EC" id="6.2.1.4"/>
    </reaction>
</comment>
<comment type="cofactor">
    <cofactor evidence="2">
        <name>Mg(2+)</name>
        <dbReference type="ChEBI" id="CHEBI:18420"/>
    </cofactor>
    <text evidence="2">Binds 1 Mg(2+) ion per subunit.</text>
</comment>
<comment type="pathway">
    <text evidence="2">Carbohydrate metabolism; tricarboxylic acid cycle; succinate from succinyl-CoA (ligase route): step 1/1.</text>
</comment>
<comment type="subunit">
    <text evidence="2">Heterodimer of an alpha and a beta subunit. The beta subunit determines specificity for GTP.</text>
</comment>
<comment type="subcellular location">
    <subcellularLocation>
        <location evidence="2">Mitochondrion</location>
    </subcellularLocation>
</comment>
<comment type="similarity">
    <text evidence="2">Belongs to the succinate/malate CoA ligase beta subunit family. GTP-specific subunit beta subfamily.</text>
</comment>
<keyword id="KW-0342">GTP-binding</keyword>
<keyword id="KW-0436">Ligase</keyword>
<keyword id="KW-0460">Magnesium</keyword>
<keyword id="KW-0479">Metal-binding</keyword>
<keyword id="KW-0496">Mitochondrion</keyword>
<keyword id="KW-0547">Nucleotide-binding</keyword>
<keyword id="KW-1185">Reference proteome</keyword>
<keyword id="KW-0809">Transit peptide</keyword>
<keyword id="KW-0816">Tricarboxylic acid cycle</keyword>
<sequence>MLRAAGNLSKSMMKSQRRFLNLQEFQSKEILEKHGCSVQNFVVASNRKEAEEKWMSFGDHEYVVKAQILAGGRGKGKFINGTKGIGGVFITKEKDAALEAIDEMIGKRLVTKQTTSEGVRVDKVMIAEGVDIKRETYLAVLMDRESNGPVVVASPDGGMDIEAVAEKTPERIFKTPIDIQMGMTEGQSLKIAKDLQFEGKLIGVAAQEIKRLYDLFIAVDATQVEINPLVETADGRVFCVDAKMNFDDSAAYRQKEIFAYETFEEHDPREVDAHQFNLNYIGMDGNIACLVNGAGLAMATMDLIKLHGGEPANFLDVGGAVTEDAVFNAVRIITSDPRVKCVLINIFGGIVNCATIANGVVSAVNKIGLNVPMVVRLEGTNVDAAKQIMKKSGLKILTANNLDEAAAKAVSSLPK</sequence>
<reference key="1">
    <citation type="journal article" date="1998" name="Science">
        <title>Genome sequence of the nematode C. elegans: a platform for investigating biology.</title>
        <authorList>
            <consortium name="The C. elegans sequencing consortium"/>
        </authorList>
    </citation>
    <scope>NUCLEOTIDE SEQUENCE [LARGE SCALE GENOMIC DNA]</scope>
    <source>
        <strain>Bristol N2</strain>
    </source>
</reference>